<dbReference type="EC" id="4.3.3.6" evidence="1"/>
<dbReference type="EC" id="3.5.1.2" evidence="1"/>
<dbReference type="EMBL" id="BA000030">
    <property type="protein sequence ID" value="BAC74542.1"/>
    <property type="molecule type" value="Genomic_DNA"/>
</dbReference>
<dbReference type="RefSeq" id="WP_010988229.1">
    <property type="nucleotide sequence ID" value="NZ_JZJK01000082.1"/>
</dbReference>
<dbReference type="SMR" id="Q81ZV5"/>
<dbReference type="GeneID" id="41543906"/>
<dbReference type="KEGG" id="sma:SAVERM_6831"/>
<dbReference type="eggNOG" id="COG0311">
    <property type="taxonomic scope" value="Bacteria"/>
</dbReference>
<dbReference type="HOGENOM" id="CLU_069674_2_0_11"/>
<dbReference type="OrthoDB" id="9810320at2"/>
<dbReference type="UniPathway" id="UPA00245"/>
<dbReference type="Proteomes" id="UP000000428">
    <property type="component" value="Chromosome"/>
</dbReference>
<dbReference type="GO" id="GO:0005829">
    <property type="term" value="C:cytosol"/>
    <property type="evidence" value="ECO:0007669"/>
    <property type="project" value="TreeGrafter"/>
</dbReference>
<dbReference type="GO" id="GO:1903600">
    <property type="term" value="C:glutaminase complex"/>
    <property type="evidence" value="ECO:0007669"/>
    <property type="project" value="TreeGrafter"/>
</dbReference>
<dbReference type="GO" id="GO:0004359">
    <property type="term" value="F:glutaminase activity"/>
    <property type="evidence" value="ECO:0007669"/>
    <property type="project" value="UniProtKB-UniRule"/>
</dbReference>
<dbReference type="GO" id="GO:0036381">
    <property type="term" value="F:pyridoxal 5'-phosphate synthase (glutamine hydrolysing) activity"/>
    <property type="evidence" value="ECO:0007669"/>
    <property type="project" value="UniProtKB-UniRule"/>
</dbReference>
<dbReference type="GO" id="GO:0006543">
    <property type="term" value="P:glutamine catabolic process"/>
    <property type="evidence" value="ECO:0007669"/>
    <property type="project" value="UniProtKB-UniRule"/>
</dbReference>
<dbReference type="GO" id="GO:0042823">
    <property type="term" value="P:pyridoxal phosphate biosynthetic process"/>
    <property type="evidence" value="ECO:0007669"/>
    <property type="project" value="UniProtKB-UniRule"/>
</dbReference>
<dbReference type="GO" id="GO:0008614">
    <property type="term" value="P:pyridoxine metabolic process"/>
    <property type="evidence" value="ECO:0007669"/>
    <property type="project" value="TreeGrafter"/>
</dbReference>
<dbReference type="CDD" id="cd01749">
    <property type="entry name" value="GATase1_PB"/>
    <property type="match status" value="1"/>
</dbReference>
<dbReference type="FunFam" id="3.40.50.880:FF:000010">
    <property type="entry name" value="uncharacterized protein LOC100176842 isoform X2"/>
    <property type="match status" value="1"/>
</dbReference>
<dbReference type="Gene3D" id="3.40.50.880">
    <property type="match status" value="1"/>
</dbReference>
<dbReference type="HAMAP" id="MF_01615">
    <property type="entry name" value="PdxT"/>
    <property type="match status" value="1"/>
</dbReference>
<dbReference type="InterPro" id="IPR029062">
    <property type="entry name" value="Class_I_gatase-like"/>
</dbReference>
<dbReference type="InterPro" id="IPR002161">
    <property type="entry name" value="PdxT/SNO"/>
</dbReference>
<dbReference type="InterPro" id="IPR021196">
    <property type="entry name" value="PdxT/SNO_CS"/>
</dbReference>
<dbReference type="NCBIfam" id="TIGR03800">
    <property type="entry name" value="PLP_synth_Pdx2"/>
    <property type="match status" value="1"/>
</dbReference>
<dbReference type="PANTHER" id="PTHR31559">
    <property type="entry name" value="PYRIDOXAL 5'-PHOSPHATE SYNTHASE SUBUNIT SNO"/>
    <property type="match status" value="1"/>
</dbReference>
<dbReference type="PANTHER" id="PTHR31559:SF0">
    <property type="entry name" value="PYRIDOXAL 5'-PHOSPHATE SYNTHASE SUBUNIT SNO1-RELATED"/>
    <property type="match status" value="1"/>
</dbReference>
<dbReference type="Pfam" id="PF01174">
    <property type="entry name" value="SNO"/>
    <property type="match status" value="1"/>
</dbReference>
<dbReference type="PIRSF" id="PIRSF005639">
    <property type="entry name" value="Glut_amidoT_SNO"/>
    <property type="match status" value="1"/>
</dbReference>
<dbReference type="SUPFAM" id="SSF52317">
    <property type="entry name" value="Class I glutamine amidotransferase-like"/>
    <property type="match status" value="1"/>
</dbReference>
<dbReference type="PROSITE" id="PS01236">
    <property type="entry name" value="PDXT_SNO_1"/>
    <property type="match status" value="1"/>
</dbReference>
<dbReference type="PROSITE" id="PS51130">
    <property type="entry name" value="PDXT_SNO_2"/>
    <property type="match status" value="1"/>
</dbReference>
<organism>
    <name type="scientific">Streptomyces avermitilis (strain ATCC 31267 / DSM 46492 / JCM 5070 / NBRC 14893 / NCIMB 12804 / NRRL 8165 / MA-4680)</name>
    <dbReference type="NCBI Taxonomy" id="227882"/>
    <lineage>
        <taxon>Bacteria</taxon>
        <taxon>Bacillati</taxon>
        <taxon>Actinomycetota</taxon>
        <taxon>Actinomycetes</taxon>
        <taxon>Kitasatosporales</taxon>
        <taxon>Streptomycetaceae</taxon>
        <taxon>Streptomyces</taxon>
    </lineage>
</organism>
<name>PDXT_STRAW</name>
<comment type="function">
    <text evidence="1">Catalyzes the hydrolysis of glutamine to glutamate and ammonia as part of the biosynthesis of pyridoxal 5'-phosphate. The resulting ammonia molecule is channeled to the active site of PdxS.</text>
</comment>
<comment type="catalytic activity">
    <reaction evidence="1">
        <text>aldehydo-D-ribose 5-phosphate + D-glyceraldehyde 3-phosphate + L-glutamine = pyridoxal 5'-phosphate + L-glutamate + phosphate + 3 H2O + H(+)</text>
        <dbReference type="Rhea" id="RHEA:31507"/>
        <dbReference type="ChEBI" id="CHEBI:15377"/>
        <dbReference type="ChEBI" id="CHEBI:15378"/>
        <dbReference type="ChEBI" id="CHEBI:29985"/>
        <dbReference type="ChEBI" id="CHEBI:43474"/>
        <dbReference type="ChEBI" id="CHEBI:58273"/>
        <dbReference type="ChEBI" id="CHEBI:58359"/>
        <dbReference type="ChEBI" id="CHEBI:59776"/>
        <dbReference type="ChEBI" id="CHEBI:597326"/>
        <dbReference type="EC" id="4.3.3.6"/>
    </reaction>
</comment>
<comment type="catalytic activity">
    <reaction evidence="1">
        <text>L-glutamine + H2O = L-glutamate + NH4(+)</text>
        <dbReference type="Rhea" id="RHEA:15889"/>
        <dbReference type="ChEBI" id="CHEBI:15377"/>
        <dbReference type="ChEBI" id="CHEBI:28938"/>
        <dbReference type="ChEBI" id="CHEBI:29985"/>
        <dbReference type="ChEBI" id="CHEBI:58359"/>
        <dbReference type="EC" id="3.5.1.2"/>
    </reaction>
</comment>
<comment type="pathway">
    <text evidence="1">Cofactor biosynthesis; pyridoxal 5'-phosphate biosynthesis.</text>
</comment>
<comment type="subunit">
    <text evidence="1">In the presence of PdxS, forms a dodecamer of heterodimers. Only shows activity in the heterodimer.</text>
</comment>
<comment type="similarity">
    <text evidence="1">Belongs to the glutaminase PdxT/SNO family.</text>
</comment>
<evidence type="ECO:0000255" key="1">
    <source>
        <dbReference type="HAMAP-Rule" id="MF_01615"/>
    </source>
</evidence>
<gene>
    <name evidence="1" type="primary">pdxT</name>
    <name type="ordered locus">SAV_6831</name>
</gene>
<feature type="chain" id="PRO_0000135665" description="Pyridoxal 5'-phosphate synthase subunit PdxT">
    <location>
        <begin position="1"/>
        <end position="201"/>
    </location>
</feature>
<feature type="active site" description="Nucleophile" evidence="1">
    <location>
        <position position="81"/>
    </location>
</feature>
<feature type="active site" description="Charge relay system" evidence="1">
    <location>
        <position position="175"/>
    </location>
</feature>
<feature type="active site" description="Charge relay system" evidence="1">
    <location>
        <position position="177"/>
    </location>
</feature>
<feature type="binding site" evidence="1">
    <location>
        <begin position="49"/>
        <end position="51"/>
    </location>
    <ligand>
        <name>L-glutamine</name>
        <dbReference type="ChEBI" id="CHEBI:58359"/>
    </ligand>
</feature>
<feature type="binding site" evidence="1">
    <location>
        <position position="110"/>
    </location>
    <ligand>
        <name>L-glutamine</name>
        <dbReference type="ChEBI" id="CHEBI:58359"/>
    </ligand>
</feature>
<feature type="binding site" evidence="1">
    <location>
        <begin position="139"/>
        <end position="140"/>
    </location>
    <ligand>
        <name>L-glutamine</name>
        <dbReference type="ChEBI" id="CHEBI:58359"/>
    </ligand>
</feature>
<accession>Q81ZV5</accession>
<sequence>MNTPVIGVLALQGDVREHLIALAAADAVAREVRRPEELAEVDGLVIPGGESTTISKLAHLFGMMEPLRARVRGGMPVYGTCAGMIMLADKILDPRSGQETIGGIDMIVRRNAFGRQNESFEATVDVKGVGGDPVEGVFIRAPWVESVGAEAEVLAEHGGHIVAVRQGNALATSFHPELTGDHRVHGLFVDMVRANRTPESL</sequence>
<reference key="1">
    <citation type="journal article" date="2001" name="Proc. Natl. Acad. Sci. U.S.A.">
        <title>Genome sequence of an industrial microorganism Streptomyces avermitilis: deducing the ability of producing secondary metabolites.</title>
        <authorList>
            <person name="Omura S."/>
            <person name="Ikeda H."/>
            <person name="Ishikawa J."/>
            <person name="Hanamoto A."/>
            <person name="Takahashi C."/>
            <person name="Shinose M."/>
            <person name="Takahashi Y."/>
            <person name="Horikawa H."/>
            <person name="Nakazawa H."/>
            <person name="Osonoe T."/>
            <person name="Kikuchi H."/>
            <person name="Shiba T."/>
            <person name="Sakaki Y."/>
            <person name="Hattori M."/>
        </authorList>
    </citation>
    <scope>NUCLEOTIDE SEQUENCE [LARGE SCALE GENOMIC DNA]</scope>
    <source>
        <strain>ATCC 31267 / DSM 46492 / JCM 5070 / NBRC 14893 / NCIMB 12804 / NRRL 8165 / MA-4680</strain>
    </source>
</reference>
<reference key="2">
    <citation type="journal article" date="2003" name="Nat. Biotechnol.">
        <title>Complete genome sequence and comparative analysis of the industrial microorganism Streptomyces avermitilis.</title>
        <authorList>
            <person name="Ikeda H."/>
            <person name="Ishikawa J."/>
            <person name="Hanamoto A."/>
            <person name="Shinose M."/>
            <person name="Kikuchi H."/>
            <person name="Shiba T."/>
            <person name="Sakaki Y."/>
            <person name="Hattori M."/>
            <person name="Omura S."/>
        </authorList>
    </citation>
    <scope>NUCLEOTIDE SEQUENCE [LARGE SCALE GENOMIC DNA]</scope>
    <source>
        <strain>ATCC 31267 / DSM 46492 / JCM 5070 / NBRC 14893 / NCIMB 12804 / NRRL 8165 / MA-4680</strain>
    </source>
</reference>
<proteinExistence type="inferred from homology"/>
<keyword id="KW-0315">Glutamine amidotransferase</keyword>
<keyword id="KW-0378">Hydrolase</keyword>
<keyword id="KW-0456">Lyase</keyword>
<keyword id="KW-0663">Pyridoxal phosphate</keyword>
<keyword id="KW-1185">Reference proteome</keyword>
<protein>
    <recommendedName>
        <fullName evidence="1">Pyridoxal 5'-phosphate synthase subunit PdxT</fullName>
        <ecNumber evidence="1">4.3.3.6</ecNumber>
    </recommendedName>
    <alternativeName>
        <fullName evidence="1">Pdx2</fullName>
    </alternativeName>
    <alternativeName>
        <fullName evidence="1">Pyridoxal 5'-phosphate synthase glutaminase subunit</fullName>
        <ecNumber evidence="1">3.5.1.2</ecNumber>
    </alternativeName>
</protein>